<proteinExistence type="inferred from homology"/>
<accession>Q9P772</accession>
<sequence length="539" mass="60044">MSSTEVPGEVSTSVSSYFDTILILDFGSQYSHLIARRLREIHVYAELLPCTQKIEALPFKPIGVILSGGPYSVYDDIAPHVDPAVFELGVPVLGICYGMQEIAWLNGRCVEPGIEREYGPATVSMEPEIKTEVFKSFFNSMPKEFEVWMSHGDRLSALPNGYETIGRTKNSPFAVIAHVTKPIIGLQFHPEVTHTPLGLQLIKNFAIEICHAKPNWSMENFVDKEILRIRKMIGPSDHVIGAVSGGVDSTVASKVLKEAIGDRFHAIMVDNGLLRLNEAEIVRETLNKHLGIQLTVVDASEEFIGKLKGVTDPEKKRKIIGNTFIHVFEREAERIVKETNGKVEYLLQGTLYPDVIESISFKGPSQTIKTHHNVGGLLKDMKLKLIEPLRELFKDEVRALGELLGIEHSLVWRHPFPGPGLGIRILGEVNAAQLEIARKADHIFITEIRNHGYYDKISQAFAALLPVKAVGVMGDKRTHEQVIALRAITTSDFMTADWYDGFSIKFLKLVSSRICNEVSGVNRVLYDISSKPPATVEME</sequence>
<organism>
    <name type="scientific">Schizosaccharomyces pombe (strain 972 / ATCC 24843)</name>
    <name type="common">Fission yeast</name>
    <dbReference type="NCBI Taxonomy" id="284812"/>
    <lineage>
        <taxon>Eukaryota</taxon>
        <taxon>Fungi</taxon>
        <taxon>Dikarya</taxon>
        <taxon>Ascomycota</taxon>
        <taxon>Taphrinomycotina</taxon>
        <taxon>Schizosaccharomycetes</taxon>
        <taxon>Schizosaccharomycetales</taxon>
        <taxon>Schizosaccharomycetaceae</taxon>
        <taxon>Schizosaccharomyces</taxon>
    </lineage>
</organism>
<keyword id="KW-0067">ATP-binding</keyword>
<keyword id="KW-0963">Cytoplasm</keyword>
<keyword id="KW-0315">Glutamine amidotransferase</keyword>
<keyword id="KW-0332">GMP biosynthesis</keyword>
<keyword id="KW-0436">Ligase</keyword>
<keyword id="KW-0460">Magnesium</keyword>
<keyword id="KW-0547">Nucleotide-binding</keyword>
<keyword id="KW-0658">Purine biosynthesis</keyword>
<keyword id="KW-1185">Reference proteome</keyword>
<dbReference type="EC" id="6.3.5.2" evidence="1"/>
<dbReference type="EMBL" id="CU329670">
    <property type="protein sequence ID" value="CAB88269.1"/>
    <property type="molecule type" value="Genomic_DNA"/>
</dbReference>
<dbReference type="RefSeq" id="NP_594312.1">
    <property type="nucleotide sequence ID" value="NM_001019735.2"/>
</dbReference>
<dbReference type="SMR" id="Q9P772"/>
<dbReference type="BioGRID" id="279029">
    <property type="interactions" value="3"/>
</dbReference>
<dbReference type="FunCoup" id="Q9P772">
    <property type="interactions" value="1180"/>
</dbReference>
<dbReference type="STRING" id="284812.Q9P772"/>
<dbReference type="MEROPS" id="C26.957"/>
<dbReference type="iPTMnet" id="Q9P772"/>
<dbReference type="PaxDb" id="4896-SPAP7G5.02c.1"/>
<dbReference type="EnsemblFungi" id="SPAP7G5.02c.1">
    <property type="protein sequence ID" value="SPAP7G5.02c.1:pep"/>
    <property type="gene ID" value="SPAP7G5.02c"/>
</dbReference>
<dbReference type="GeneID" id="2542573"/>
<dbReference type="KEGG" id="spo:2542573"/>
<dbReference type="PomBase" id="SPAP7G5.02c">
    <property type="gene designation" value="gua2"/>
</dbReference>
<dbReference type="VEuPathDB" id="FungiDB:SPAP7G5.02c"/>
<dbReference type="eggNOG" id="KOG1622">
    <property type="taxonomic scope" value="Eukaryota"/>
</dbReference>
<dbReference type="HOGENOM" id="CLU_014340_0_5_1"/>
<dbReference type="InParanoid" id="Q9P772"/>
<dbReference type="OMA" id="IWQSFAV"/>
<dbReference type="PhylomeDB" id="Q9P772"/>
<dbReference type="Reactome" id="R-SPO-73817">
    <property type="pathway name" value="Purine ribonucleoside monophosphate biosynthesis"/>
</dbReference>
<dbReference type="Reactome" id="R-SPO-9748787">
    <property type="pathway name" value="Azathioprine ADME"/>
</dbReference>
<dbReference type="UniPathway" id="UPA00189">
    <property type="reaction ID" value="UER00296"/>
</dbReference>
<dbReference type="PRO" id="PR:Q9P772"/>
<dbReference type="Proteomes" id="UP000002485">
    <property type="component" value="Chromosome I"/>
</dbReference>
<dbReference type="GO" id="GO:0005829">
    <property type="term" value="C:cytosol"/>
    <property type="evidence" value="ECO:0007005"/>
    <property type="project" value="PomBase"/>
</dbReference>
<dbReference type="GO" id="GO:0005524">
    <property type="term" value="F:ATP binding"/>
    <property type="evidence" value="ECO:0007669"/>
    <property type="project" value="UniProtKB-KW"/>
</dbReference>
<dbReference type="GO" id="GO:0003922">
    <property type="term" value="F:GMP synthase (glutamine-hydrolyzing) activity"/>
    <property type="evidence" value="ECO:0000250"/>
    <property type="project" value="UniProtKB"/>
</dbReference>
<dbReference type="GO" id="GO:0003921">
    <property type="term" value="F:GMP synthase activity"/>
    <property type="evidence" value="ECO:0000318"/>
    <property type="project" value="GO_Central"/>
</dbReference>
<dbReference type="GO" id="GO:0006177">
    <property type="term" value="P:GMP biosynthetic process"/>
    <property type="evidence" value="ECO:0000250"/>
    <property type="project" value="UniProtKB"/>
</dbReference>
<dbReference type="CDD" id="cd01742">
    <property type="entry name" value="GATase1_GMP_Synthase"/>
    <property type="match status" value="1"/>
</dbReference>
<dbReference type="CDD" id="cd01997">
    <property type="entry name" value="GMP_synthase_C"/>
    <property type="match status" value="1"/>
</dbReference>
<dbReference type="FunFam" id="3.30.300.10:FF:000002">
    <property type="entry name" value="GMP synthase [glutamine-hydrolyzing]"/>
    <property type="match status" value="1"/>
</dbReference>
<dbReference type="FunFam" id="3.40.50.620:FF:000001">
    <property type="entry name" value="GMP synthase [glutamine-hydrolyzing]"/>
    <property type="match status" value="1"/>
</dbReference>
<dbReference type="FunFam" id="3.40.50.880:FF:000001">
    <property type="entry name" value="GMP synthase [glutamine-hydrolyzing]"/>
    <property type="match status" value="1"/>
</dbReference>
<dbReference type="Gene3D" id="3.30.300.10">
    <property type="match status" value="1"/>
</dbReference>
<dbReference type="Gene3D" id="3.40.50.880">
    <property type="match status" value="1"/>
</dbReference>
<dbReference type="Gene3D" id="3.40.50.620">
    <property type="entry name" value="HUPs"/>
    <property type="match status" value="1"/>
</dbReference>
<dbReference type="HAMAP" id="MF_00344">
    <property type="entry name" value="GMP_synthase"/>
    <property type="match status" value="1"/>
</dbReference>
<dbReference type="InterPro" id="IPR029062">
    <property type="entry name" value="Class_I_gatase-like"/>
</dbReference>
<dbReference type="InterPro" id="IPR017926">
    <property type="entry name" value="GATASE"/>
</dbReference>
<dbReference type="InterPro" id="IPR001674">
    <property type="entry name" value="GMP_synth_C"/>
</dbReference>
<dbReference type="InterPro" id="IPR004739">
    <property type="entry name" value="GMP_synth_GATase"/>
</dbReference>
<dbReference type="InterPro" id="IPR022955">
    <property type="entry name" value="GMP_synthase"/>
</dbReference>
<dbReference type="InterPro" id="IPR025777">
    <property type="entry name" value="GMPS_ATP_PPase_dom"/>
</dbReference>
<dbReference type="InterPro" id="IPR014729">
    <property type="entry name" value="Rossmann-like_a/b/a_fold"/>
</dbReference>
<dbReference type="NCBIfam" id="TIGR00884">
    <property type="entry name" value="guaA_Cterm"/>
    <property type="match status" value="1"/>
</dbReference>
<dbReference type="NCBIfam" id="TIGR00888">
    <property type="entry name" value="guaA_Nterm"/>
    <property type="match status" value="1"/>
</dbReference>
<dbReference type="NCBIfam" id="NF000848">
    <property type="entry name" value="PRK00074.1"/>
    <property type="match status" value="1"/>
</dbReference>
<dbReference type="PANTHER" id="PTHR11922:SF2">
    <property type="entry name" value="GMP SYNTHASE [GLUTAMINE-HYDROLYZING]"/>
    <property type="match status" value="1"/>
</dbReference>
<dbReference type="PANTHER" id="PTHR11922">
    <property type="entry name" value="GMP SYNTHASE-RELATED"/>
    <property type="match status" value="1"/>
</dbReference>
<dbReference type="Pfam" id="PF00117">
    <property type="entry name" value="GATase"/>
    <property type="match status" value="1"/>
</dbReference>
<dbReference type="Pfam" id="PF00958">
    <property type="entry name" value="GMP_synt_C"/>
    <property type="match status" value="1"/>
</dbReference>
<dbReference type="PRINTS" id="PR00097">
    <property type="entry name" value="ANTSNTHASEII"/>
</dbReference>
<dbReference type="PRINTS" id="PR00096">
    <property type="entry name" value="GATASE"/>
</dbReference>
<dbReference type="SUPFAM" id="SSF52402">
    <property type="entry name" value="Adenine nucleotide alpha hydrolases-like"/>
    <property type="match status" value="1"/>
</dbReference>
<dbReference type="SUPFAM" id="SSF52317">
    <property type="entry name" value="Class I glutamine amidotransferase-like"/>
    <property type="match status" value="1"/>
</dbReference>
<dbReference type="SUPFAM" id="SSF54810">
    <property type="entry name" value="GMP synthetase C-terminal dimerisation domain"/>
    <property type="match status" value="1"/>
</dbReference>
<dbReference type="PROSITE" id="PS51273">
    <property type="entry name" value="GATASE_TYPE_1"/>
    <property type="match status" value="1"/>
</dbReference>
<dbReference type="PROSITE" id="PS51553">
    <property type="entry name" value="GMPS_ATP_PPASE"/>
    <property type="match status" value="1"/>
</dbReference>
<reference key="1">
    <citation type="journal article" date="2002" name="Nature">
        <title>The genome sequence of Schizosaccharomyces pombe.</title>
        <authorList>
            <person name="Wood V."/>
            <person name="Gwilliam R."/>
            <person name="Rajandream M.A."/>
            <person name="Lyne M.H."/>
            <person name="Lyne R."/>
            <person name="Stewart A."/>
            <person name="Sgouros J.G."/>
            <person name="Peat N."/>
            <person name="Hayles J."/>
            <person name="Baker S.G."/>
            <person name="Basham D."/>
            <person name="Bowman S."/>
            <person name="Brooks K."/>
            <person name="Brown D."/>
            <person name="Brown S."/>
            <person name="Chillingworth T."/>
            <person name="Churcher C.M."/>
            <person name="Collins M."/>
            <person name="Connor R."/>
            <person name="Cronin A."/>
            <person name="Davis P."/>
            <person name="Feltwell T."/>
            <person name="Fraser A."/>
            <person name="Gentles S."/>
            <person name="Goble A."/>
            <person name="Hamlin N."/>
            <person name="Harris D.E."/>
            <person name="Hidalgo J."/>
            <person name="Hodgson G."/>
            <person name="Holroyd S."/>
            <person name="Hornsby T."/>
            <person name="Howarth S."/>
            <person name="Huckle E.J."/>
            <person name="Hunt S."/>
            <person name="Jagels K."/>
            <person name="James K.D."/>
            <person name="Jones L."/>
            <person name="Jones M."/>
            <person name="Leather S."/>
            <person name="McDonald S."/>
            <person name="McLean J."/>
            <person name="Mooney P."/>
            <person name="Moule S."/>
            <person name="Mungall K.L."/>
            <person name="Murphy L.D."/>
            <person name="Niblett D."/>
            <person name="Odell C."/>
            <person name="Oliver K."/>
            <person name="O'Neil S."/>
            <person name="Pearson D."/>
            <person name="Quail M.A."/>
            <person name="Rabbinowitsch E."/>
            <person name="Rutherford K.M."/>
            <person name="Rutter S."/>
            <person name="Saunders D."/>
            <person name="Seeger K."/>
            <person name="Sharp S."/>
            <person name="Skelton J."/>
            <person name="Simmonds M.N."/>
            <person name="Squares R."/>
            <person name="Squares S."/>
            <person name="Stevens K."/>
            <person name="Taylor K."/>
            <person name="Taylor R.G."/>
            <person name="Tivey A."/>
            <person name="Walsh S.V."/>
            <person name="Warren T."/>
            <person name="Whitehead S."/>
            <person name="Woodward J.R."/>
            <person name="Volckaert G."/>
            <person name="Aert R."/>
            <person name="Robben J."/>
            <person name="Grymonprez B."/>
            <person name="Weltjens I."/>
            <person name="Vanstreels E."/>
            <person name="Rieger M."/>
            <person name="Schaefer M."/>
            <person name="Mueller-Auer S."/>
            <person name="Gabel C."/>
            <person name="Fuchs M."/>
            <person name="Duesterhoeft A."/>
            <person name="Fritzc C."/>
            <person name="Holzer E."/>
            <person name="Moestl D."/>
            <person name="Hilbert H."/>
            <person name="Borzym K."/>
            <person name="Langer I."/>
            <person name="Beck A."/>
            <person name="Lehrach H."/>
            <person name="Reinhardt R."/>
            <person name="Pohl T.M."/>
            <person name="Eger P."/>
            <person name="Zimmermann W."/>
            <person name="Wedler H."/>
            <person name="Wambutt R."/>
            <person name="Purnelle B."/>
            <person name="Goffeau A."/>
            <person name="Cadieu E."/>
            <person name="Dreano S."/>
            <person name="Gloux S."/>
            <person name="Lelaure V."/>
            <person name="Mottier S."/>
            <person name="Galibert F."/>
            <person name="Aves S.J."/>
            <person name="Xiang Z."/>
            <person name="Hunt C."/>
            <person name="Moore K."/>
            <person name="Hurst S.M."/>
            <person name="Lucas M."/>
            <person name="Rochet M."/>
            <person name="Gaillardin C."/>
            <person name="Tallada V.A."/>
            <person name="Garzon A."/>
            <person name="Thode G."/>
            <person name="Daga R.R."/>
            <person name="Cruzado L."/>
            <person name="Jimenez J."/>
            <person name="Sanchez M."/>
            <person name="del Rey F."/>
            <person name="Benito J."/>
            <person name="Dominguez A."/>
            <person name="Revuelta J.L."/>
            <person name="Moreno S."/>
            <person name="Armstrong J."/>
            <person name="Forsburg S.L."/>
            <person name="Cerutti L."/>
            <person name="Lowe T."/>
            <person name="McCombie W.R."/>
            <person name="Paulsen I."/>
            <person name="Potashkin J."/>
            <person name="Shpakovski G.V."/>
            <person name="Ussery D."/>
            <person name="Barrell B.G."/>
            <person name="Nurse P."/>
        </authorList>
    </citation>
    <scope>NUCLEOTIDE SEQUENCE [LARGE SCALE GENOMIC DNA]</scope>
    <source>
        <strain>972 / ATCC 24843</strain>
    </source>
</reference>
<reference key="2">
    <citation type="journal article" date="2006" name="Nat. Biotechnol.">
        <title>ORFeome cloning and global analysis of protein localization in the fission yeast Schizosaccharomyces pombe.</title>
        <authorList>
            <person name="Matsuyama A."/>
            <person name="Arai R."/>
            <person name="Yashiroda Y."/>
            <person name="Shirai A."/>
            <person name="Kamata A."/>
            <person name="Sekido S."/>
            <person name="Kobayashi Y."/>
            <person name="Hashimoto A."/>
            <person name="Hamamoto M."/>
            <person name="Hiraoka Y."/>
            <person name="Horinouchi S."/>
            <person name="Yoshida M."/>
        </authorList>
    </citation>
    <scope>SUBCELLULAR LOCATION [LARGE SCALE ANALYSIS]</scope>
</reference>
<evidence type="ECO:0000250" key="1">
    <source>
        <dbReference type="UniProtKB" id="P38625"/>
    </source>
</evidence>
<evidence type="ECO:0000250" key="2">
    <source>
        <dbReference type="UniProtKB" id="P49915"/>
    </source>
</evidence>
<evidence type="ECO:0000250" key="3">
    <source>
        <dbReference type="UniProtKB" id="Q4WFT3"/>
    </source>
</evidence>
<evidence type="ECO:0000255" key="4">
    <source>
        <dbReference type="PROSITE-ProRule" id="PRU00605"/>
    </source>
</evidence>
<evidence type="ECO:0000255" key="5">
    <source>
        <dbReference type="PROSITE-ProRule" id="PRU00886"/>
    </source>
</evidence>
<evidence type="ECO:0000269" key="6">
    <source>
    </source>
</evidence>
<evidence type="ECO:0000305" key="7"/>
<evidence type="ECO:0000312" key="8">
    <source>
        <dbReference type="PomBase" id="SPAP7G5.02c"/>
    </source>
</evidence>
<protein>
    <recommendedName>
        <fullName>GMP synthase [glutamine-hydrolyzing]</fullName>
        <ecNumber evidence="1">6.3.5.2</ecNumber>
    </recommendedName>
    <alternativeName>
        <fullName>GMP synthetase</fullName>
    </alternativeName>
    <alternativeName>
        <fullName>Glutamine amidotransferase</fullName>
    </alternativeName>
</protein>
<feature type="chain" id="PRO_0000286154" description="GMP synthase [glutamine-hydrolyzing]">
    <location>
        <begin position="1"/>
        <end position="539"/>
    </location>
</feature>
<feature type="domain" description="Glutamine amidotransferase type-1" evidence="4">
    <location>
        <begin position="20"/>
        <end position="215"/>
    </location>
</feature>
<feature type="domain" description="GMPS ATP-PPase" evidence="5">
    <location>
        <begin position="216"/>
        <end position="413"/>
    </location>
</feature>
<feature type="active site" description="Nucleophile" evidence="4">
    <location>
        <position position="96"/>
    </location>
</feature>
<feature type="active site" evidence="4">
    <location>
        <position position="189"/>
    </location>
</feature>
<feature type="active site" evidence="4">
    <location>
        <position position="191"/>
    </location>
</feature>
<feature type="binding site" evidence="5">
    <location>
        <begin position="244"/>
        <end position="250"/>
    </location>
    <ligand>
        <name>ATP</name>
        <dbReference type="ChEBI" id="CHEBI:30616"/>
    </ligand>
</feature>
<feature type="binding site" evidence="2">
    <location>
        <position position="317"/>
    </location>
    <ligand>
        <name>XMP</name>
        <dbReference type="ChEBI" id="CHEBI:57464"/>
    </ligand>
</feature>
<feature type="binding site" evidence="2">
    <location>
        <position position="475"/>
    </location>
    <ligand>
        <name>XMP</name>
        <dbReference type="ChEBI" id="CHEBI:57464"/>
    </ligand>
</feature>
<feature type="binding site" evidence="2">
    <location>
        <position position="531"/>
    </location>
    <ligand>
        <name>XMP</name>
        <dbReference type="ChEBI" id="CHEBI:57464"/>
    </ligand>
</feature>
<feature type="binding site" evidence="2">
    <location>
        <position position="537"/>
    </location>
    <ligand>
        <name>XMP</name>
        <dbReference type="ChEBI" id="CHEBI:57464"/>
    </ligand>
</feature>
<comment type="function">
    <text evidence="1">Catalyzes the conversion of xanthine monophosphate (XMP) to GMP in the presence of glutamine and ATP through an adenyl-XMP intermediate.</text>
</comment>
<comment type="catalytic activity">
    <reaction evidence="1">
        <text>XMP + L-glutamine + ATP + H2O = GMP + L-glutamate + AMP + diphosphate + 2 H(+)</text>
        <dbReference type="Rhea" id="RHEA:11680"/>
        <dbReference type="ChEBI" id="CHEBI:15377"/>
        <dbReference type="ChEBI" id="CHEBI:15378"/>
        <dbReference type="ChEBI" id="CHEBI:29985"/>
        <dbReference type="ChEBI" id="CHEBI:30616"/>
        <dbReference type="ChEBI" id="CHEBI:33019"/>
        <dbReference type="ChEBI" id="CHEBI:57464"/>
        <dbReference type="ChEBI" id="CHEBI:58115"/>
        <dbReference type="ChEBI" id="CHEBI:58359"/>
        <dbReference type="ChEBI" id="CHEBI:456215"/>
        <dbReference type="EC" id="6.3.5.2"/>
    </reaction>
</comment>
<comment type="cofactor">
    <cofactor evidence="3">
        <name>Mg(2+)</name>
        <dbReference type="ChEBI" id="CHEBI:18420"/>
    </cofactor>
</comment>
<comment type="pathway">
    <text evidence="1">Purine metabolism; GMP biosynthesis; GMP from XMP (L-Gln route): step 1/1.</text>
</comment>
<comment type="subunit">
    <text evidence="3">Homodimer.</text>
</comment>
<comment type="subcellular location">
    <subcellularLocation>
        <location evidence="6">Cytoplasm</location>
        <location evidence="6">Cytosol</location>
    </subcellularLocation>
</comment>
<name>GUAA_SCHPO</name>
<gene>
    <name evidence="8" type="primary">gua2</name>
    <name evidence="7" type="synonym">gua1</name>
    <name evidence="8" type="ORF">SPAP7G5.02c</name>
</gene>